<organism>
    <name type="scientific">Aliivibrio fischeri (strain MJ11)</name>
    <name type="common">Vibrio fischeri</name>
    <dbReference type="NCBI Taxonomy" id="388396"/>
    <lineage>
        <taxon>Bacteria</taxon>
        <taxon>Pseudomonadati</taxon>
        <taxon>Pseudomonadota</taxon>
        <taxon>Gammaproteobacteria</taxon>
        <taxon>Vibrionales</taxon>
        <taxon>Vibrionaceae</taxon>
        <taxon>Aliivibrio</taxon>
    </lineage>
</organism>
<sequence length="668" mass="73595">MSIEQTLDELKQQLNYHAYRYYVEDSPELPDAEYDRMMQELLSIESEHPELVTVDSPSQRVGGEALDGFTQIQHEIPMLSLDNAFSDEELEAFEKRMNDRLISKPVSLFCCEPKLDGLAVSLLYVNGKLVQAGTRGDGTTGENITENVRTIRCIPLTLQGEGWPTRLEVRGEVFMPKAGFEALNERALKRGEKPFANPRNAAAGSLRQLDSKITATRPLSFYAYSVGVIEGGELETSHYQRFVQLKSWGLPMCEETKQCYSLTEVKAYYKDILKRRDALKYEIDGVVIKVDDIALQEQLGFVARAPRWAIAYKFPAQEELTVLNDVEFQVGRTGAITPVAKLEPVFVGGVTVSNATLHNADEIARLGVHIGDTVIIRRAGDVIPQIVSVVEARRPTDSKAIVYPTHCPVCGSNLERVEGEAVTRCGAGLVCQAQRKEALKHFVSRKALDVDGLGDKVVEQLVDKEMVETPADLFKLSAGVLTVLERMGPKSAQNVVDALNKAKATTLPRFLYSLGIREVGEATAANLAAHFYTLEAIQVATFEQLIEVSDVGDIVAKHVLNFFAEPHNKTVIDDLQEMGIHWPEIKALDESVPQPLAGKVVVLTGTLHKLKRNEAKAALQELGAKVTGSVSKKTDILFAGEAAGSKLAKAEELGVEVMNEEQLIELLN</sequence>
<comment type="function">
    <text evidence="1">DNA ligase that catalyzes the formation of phosphodiester linkages between 5'-phosphoryl and 3'-hydroxyl groups in double-stranded DNA using NAD as a coenzyme and as the energy source for the reaction. It is essential for DNA replication and repair of damaged DNA.</text>
</comment>
<comment type="catalytic activity">
    <reaction evidence="1">
        <text>NAD(+) + (deoxyribonucleotide)n-3'-hydroxyl + 5'-phospho-(deoxyribonucleotide)m = (deoxyribonucleotide)n+m + AMP + beta-nicotinamide D-nucleotide.</text>
        <dbReference type="EC" id="6.5.1.2"/>
    </reaction>
</comment>
<comment type="cofactor">
    <cofactor evidence="1">
        <name>Mg(2+)</name>
        <dbReference type="ChEBI" id="CHEBI:18420"/>
    </cofactor>
    <cofactor evidence="1">
        <name>Mn(2+)</name>
        <dbReference type="ChEBI" id="CHEBI:29035"/>
    </cofactor>
</comment>
<comment type="similarity">
    <text evidence="1">Belongs to the NAD-dependent DNA ligase family. LigA subfamily.</text>
</comment>
<reference key="1">
    <citation type="submission" date="2008-08" db="EMBL/GenBank/DDBJ databases">
        <title>Complete sequence of Vibrio fischeri strain MJ11.</title>
        <authorList>
            <person name="Mandel M.J."/>
            <person name="Stabb E.V."/>
            <person name="Ruby E.G."/>
            <person name="Ferriera S."/>
            <person name="Johnson J."/>
            <person name="Kravitz S."/>
            <person name="Beeson K."/>
            <person name="Sutton G."/>
            <person name="Rogers Y.-H."/>
            <person name="Friedman R."/>
            <person name="Frazier M."/>
            <person name="Venter J.C."/>
        </authorList>
    </citation>
    <scope>NUCLEOTIDE SEQUENCE [LARGE SCALE GENOMIC DNA]</scope>
    <source>
        <strain>MJ11</strain>
    </source>
</reference>
<feature type="chain" id="PRO_0000380505" description="DNA ligase">
    <location>
        <begin position="1"/>
        <end position="668"/>
    </location>
</feature>
<feature type="domain" description="BRCT" evidence="1">
    <location>
        <begin position="591"/>
        <end position="668"/>
    </location>
</feature>
<feature type="active site" description="N6-AMP-lysine intermediate" evidence="1">
    <location>
        <position position="114"/>
    </location>
</feature>
<feature type="binding site" evidence="1">
    <location>
        <begin position="31"/>
        <end position="35"/>
    </location>
    <ligand>
        <name>NAD(+)</name>
        <dbReference type="ChEBI" id="CHEBI:57540"/>
    </ligand>
</feature>
<feature type="binding site" evidence="1">
    <location>
        <begin position="80"/>
        <end position="81"/>
    </location>
    <ligand>
        <name>NAD(+)</name>
        <dbReference type="ChEBI" id="CHEBI:57540"/>
    </ligand>
</feature>
<feature type="binding site" evidence="1">
    <location>
        <position position="112"/>
    </location>
    <ligand>
        <name>NAD(+)</name>
        <dbReference type="ChEBI" id="CHEBI:57540"/>
    </ligand>
</feature>
<feature type="binding site" evidence="1">
    <location>
        <position position="135"/>
    </location>
    <ligand>
        <name>NAD(+)</name>
        <dbReference type="ChEBI" id="CHEBI:57540"/>
    </ligand>
</feature>
<feature type="binding site" evidence="1">
    <location>
        <position position="172"/>
    </location>
    <ligand>
        <name>NAD(+)</name>
        <dbReference type="ChEBI" id="CHEBI:57540"/>
    </ligand>
</feature>
<feature type="binding site" evidence="1">
    <location>
        <position position="289"/>
    </location>
    <ligand>
        <name>NAD(+)</name>
        <dbReference type="ChEBI" id="CHEBI:57540"/>
    </ligand>
</feature>
<feature type="binding site" evidence="1">
    <location>
        <position position="313"/>
    </location>
    <ligand>
        <name>NAD(+)</name>
        <dbReference type="ChEBI" id="CHEBI:57540"/>
    </ligand>
</feature>
<feature type="binding site" evidence="1">
    <location>
        <position position="407"/>
    </location>
    <ligand>
        <name>Zn(2+)</name>
        <dbReference type="ChEBI" id="CHEBI:29105"/>
    </ligand>
</feature>
<feature type="binding site" evidence="1">
    <location>
        <position position="410"/>
    </location>
    <ligand>
        <name>Zn(2+)</name>
        <dbReference type="ChEBI" id="CHEBI:29105"/>
    </ligand>
</feature>
<feature type="binding site" evidence="1">
    <location>
        <position position="425"/>
    </location>
    <ligand>
        <name>Zn(2+)</name>
        <dbReference type="ChEBI" id="CHEBI:29105"/>
    </ligand>
</feature>
<feature type="binding site" evidence="1">
    <location>
        <position position="431"/>
    </location>
    <ligand>
        <name>Zn(2+)</name>
        <dbReference type="ChEBI" id="CHEBI:29105"/>
    </ligand>
</feature>
<name>DNLJ_ALIFM</name>
<evidence type="ECO:0000255" key="1">
    <source>
        <dbReference type="HAMAP-Rule" id="MF_01588"/>
    </source>
</evidence>
<proteinExistence type="inferred from homology"/>
<keyword id="KW-0227">DNA damage</keyword>
<keyword id="KW-0234">DNA repair</keyword>
<keyword id="KW-0235">DNA replication</keyword>
<keyword id="KW-0436">Ligase</keyword>
<keyword id="KW-0460">Magnesium</keyword>
<keyword id="KW-0464">Manganese</keyword>
<keyword id="KW-0479">Metal-binding</keyword>
<keyword id="KW-0520">NAD</keyword>
<keyword id="KW-0862">Zinc</keyword>
<gene>
    <name evidence="1" type="primary">ligA</name>
    <name type="ordered locus">VFMJ11_2025</name>
</gene>
<accession>B5FGU7</accession>
<protein>
    <recommendedName>
        <fullName evidence="1">DNA ligase</fullName>
        <ecNumber evidence="1">6.5.1.2</ecNumber>
    </recommendedName>
    <alternativeName>
        <fullName evidence="1">Polydeoxyribonucleotide synthase [NAD(+)]</fullName>
    </alternativeName>
</protein>
<dbReference type="EC" id="6.5.1.2" evidence="1"/>
<dbReference type="EMBL" id="CP001139">
    <property type="protein sequence ID" value="ACH67175.1"/>
    <property type="molecule type" value="Genomic_DNA"/>
</dbReference>
<dbReference type="RefSeq" id="WP_012534249.1">
    <property type="nucleotide sequence ID" value="NC_011184.1"/>
</dbReference>
<dbReference type="SMR" id="B5FGU7"/>
<dbReference type="KEGG" id="vfm:VFMJ11_2025"/>
<dbReference type="HOGENOM" id="CLU_007764_2_1_6"/>
<dbReference type="Proteomes" id="UP000001857">
    <property type="component" value="Chromosome I"/>
</dbReference>
<dbReference type="GO" id="GO:0005829">
    <property type="term" value="C:cytosol"/>
    <property type="evidence" value="ECO:0007669"/>
    <property type="project" value="TreeGrafter"/>
</dbReference>
<dbReference type="GO" id="GO:0003677">
    <property type="term" value="F:DNA binding"/>
    <property type="evidence" value="ECO:0007669"/>
    <property type="project" value="InterPro"/>
</dbReference>
<dbReference type="GO" id="GO:0003911">
    <property type="term" value="F:DNA ligase (NAD+) activity"/>
    <property type="evidence" value="ECO:0007669"/>
    <property type="project" value="UniProtKB-UniRule"/>
</dbReference>
<dbReference type="GO" id="GO:0046872">
    <property type="term" value="F:metal ion binding"/>
    <property type="evidence" value="ECO:0007669"/>
    <property type="project" value="UniProtKB-KW"/>
</dbReference>
<dbReference type="GO" id="GO:0006281">
    <property type="term" value="P:DNA repair"/>
    <property type="evidence" value="ECO:0007669"/>
    <property type="project" value="UniProtKB-KW"/>
</dbReference>
<dbReference type="GO" id="GO:0006260">
    <property type="term" value="P:DNA replication"/>
    <property type="evidence" value="ECO:0007669"/>
    <property type="project" value="UniProtKB-KW"/>
</dbReference>
<dbReference type="CDD" id="cd17748">
    <property type="entry name" value="BRCT_DNA_ligase_like"/>
    <property type="match status" value="1"/>
</dbReference>
<dbReference type="CDD" id="cd00114">
    <property type="entry name" value="LIGANc"/>
    <property type="match status" value="1"/>
</dbReference>
<dbReference type="FunFam" id="1.10.150.20:FF:000006">
    <property type="entry name" value="DNA ligase"/>
    <property type="match status" value="1"/>
</dbReference>
<dbReference type="FunFam" id="1.10.150.20:FF:000007">
    <property type="entry name" value="DNA ligase"/>
    <property type="match status" value="1"/>
</dbReference>
<dbReference type="FunFam" id="1.10.287.610:FF:000002">
    <property type="entry name" value="DNA ligase"/>
    <property type="match status" value="1"/>
</dbReference>
<dbReference type="FunFam" id="2.40.50.140:FF:000012">
    <property type="entry name" value="DNA ligase"/>
    <property type="match status" value="1"/>
</dbReference>
<dbReference type="FunFam" id="3.30.470.30:FF:000001">
    <property type="entry name" value="DNA ligase"/>
    <property type="match status" value="1"/>
</dbReference>
<dbReference type="Gene3D" id="6.20.10.30">
    <property type="match status" value="1"/>
</dbReference>
<dbReference type="Gene3D" id="1.10.150.20">
    <property type="entry name" value="5' to 3' exonuclease, C-terminal subdomain"/>
    <property type="match status" value="2"/>
</dbReference>
<dbReference type="Gene3D" id="3.40.50.10190">
    <property type="entry name" value="BRCT domain"/>
    <property type="match status" value="1"/>
</dbReference>
<dbReference type="Gene3D" id="3.30.470.30">
    <property type="entry name" value="DNA ligase/mRNA capping enzyme"/>
    <property type="match status" value="1"/>
</dbReference>
<dbReference type="Gene3D" id="1.10.287.610">
    <property type="entry name" value="Helix hairpin bin"/>
    <property type="match status" value="1"/>
</dbReference>
<dbReference type="Gene3D" id="2.40.50.140">
    <property type="entry name" value="Nucleic acid-binding proteins"/>
    <property type="match status" value="1"/>
</dbReference>
<dbReference type="HAMAP" id="MF_01588">
    <property type="entry name" value="DNA_ligase_A"/>
    <property type="match status" value="1"/>
</dbReference>
<dbReference type="InterPro" id="IPR001357">
    <property type="entry name" value="BRCT_dom"/>
</dbReference>
<dbReference type="InterPro" id="IPR036420">
    <property type="entry name" value="BRCT_dom_sf"/>
</dbReference>
<dbReference type="InterPro" id="IPR041663">
    <property type="entry name" value="DisA/LigA_HHH"/>
</dbReference>
<dbReference type="InterPro" id="IPR001679">
    <property type="entry name" value="DNA_ligase"/>
</dbReference>
<dbReference type="InterPro" id="IPR018239">
    <property type="entry name" value="DNA_ligase_AS"/>
</dbReference>
<dbReference type="InterPro" id="IPR033136">
    <property type="entry name" value="DNA_ligase_CS"/>
</dbReference>
<dbReference type="InterPro" id="IPR013839">
    <property type="entry name" value="DNAligase_adenylation"/>
</dbReference>
<dbReference type="InterPro" id="IPR013840">
    <property type="entry name" value="DNAligase_N"/>
</dbReference>
<dbReference type="InterPro" id="IPR003583">
    <property type="entry name" value="Hlx-hairpin-Hlx_DNA-bd_motif"/>
</dbReference>
<dbReference type="InterPro" id="IPR012340">
    <property type="entry name" value="NA-bd_OB-fold"/>
</dbReference>
<dbReference type="InterPro" id="IPR004150">
    <property type="entry name" value="NAD_DNA_ligase_OB"/>
</dbReference>
<dbReference type="InterPro" id="IPR010994">
    <property type="entry name" value="RuvA_2-like"/>
</dbReference>
<dbReference type="InterPro" id="IPR004149">
    <property type="entry name" value="Znf_DNAligase_C4"/>
</dbReference>
<dbReference type="NCBIfam" id="TIGR00575">
    <property type="entry name" value="dnlj"/>
    <property type="match status" value="1"/>
</dbReference>
<dbReference type="NCBIfam" id="NF005932">
    <property type="entry name" value="PRK07956.1"/>
    <property type="match status" value="1"/>
</dbReference>
<dbReference type="PANTHER" id="PTHR23389">
    <property type="entry name" value="CHROMOSOME TRANSMISSION FIDELITY FACTOR 18"/>
    <property type="match status" value="1"/>
</dbReference>
<dbReference type="PANTHER" id="PTHR23389:SF9">
    <property type="entry name" value="DNA LIGASE"/>
    <property type="match status" value="1"/>
</dbReference>
<dbReference type="Pfam" id="PF00533">
    <property type="entry name" value="BRCT"/>
    <property type="match status" value="1"/>
</dbReference>
<dbReference type="Pfam" id="PF01653">
    <property type="entry name" value="DNA_ligase_aden"/>
    <property type="match status" value="1"/>
</dbReference>
<dbReference type="Pfam" id="PF03120">
    <property type="entry name" value="DNA_ligase_OB"/>
    <property type="match status" value="1"/>
</dbReference>
<dbReference type="Pfam" id="PF03119">
    <property type="entry name" value="DNA_ligase_ZBD"/>
    <property type="match status" value="1"/>
</dbReference>
<dbReference type="Pfam" id="PF12826">
    <property type="entry name" value="HHH_2"/>
    <property type="match status" value="1"/>
</dbReference>
<dbReference type="Pfam" id="PF14520">
    <property type="entry name" value="HHH_5"/>
    <property type="match status" value="1"/>
</dbReference>
<dbReference type="Pfam" id="PF22745">
    <property type="entry name" value="Nlig-Ia"/>
    <property type="match status" value="1"/>
</dbReference>
<dbReference type="PIRSF" id="PIRSF001604">
    <property type="entry name" value="LigA"/>
    <property type="match status" value="1"/>
</dbReference>
<dbReference type="SMART" id="SM00292">
    <property type="entry name" value="BRCT"/>
    <property type="match status" value="1"/>
</dbReference>
<dbReference type="SMART" id="SM00278">
    <property type="entry name" value="HhH1"/>
    <property type="match status" value="4"/>
</dbReference>
<dbReference type="SMART" id="SM00532">
    <property type="entry name" value="LIGANc"/>
    <property type="match status" value="1"/>
</dbReference>
<dbReference type="SUPFAM" id="SSF52113">
    <property type="entry name" value="BRCT domain"/>
    <property type="match status" value="1"/>
</dbReference>
<dbReference type="SUPFAM" id="SSF56091">
    <property type="entry name" value="DNA ligase/mRNA capping enzyme, catalytic domain"/>
    <property type="match status" value="1"/>
</dbReference>
<dbReference type="SUPFAM" id="SSF50249">
    <property type="entry name" value="Nucleic acid-binding proteins"/>
    <property type="match status" value="1"/>
</dbReference>
<dbReference type="SUPFAM" id="SSF47781">
    <property type="entry name" value="RuvA domain 2-like"/>
    <property type="match status" value="1"/>
</dbReference>
<dbReference type="PROSITE" id="PS50172">
    <property type="entry name" value="BRCT"/>
    <property type="match status" value="1"/>
</dbReference>
<dbReference type="PROSITE" id="PS01055">
    <property type="entry name" value="DNA_LIGASE_N1"/>
    <property type="match status" value="1"/>
</dbReference>
<dbReference type="PROSITE" id="PS01056">
    <property type="entry name" value="DNA_LIGASE_N2"/>
    <property type="match status" value="1"/>
</dbReference>